<keyword id="KW-0169">Cobalamin biosynthesis</keyword>
<keyword id="KW-0315">Glutamine amidotransferase</keyword>
<dbReference type="EMBL" id="AE008923">
    <property type="protein sequence ID" value="AAM38032.1"/>
    <property type="molecule type" value="Genomic_DNA"/>
</dbReference>
<dbReference type="RefSeq" id="WP_011052092.1">
    <property type="nucleotide sequence ID" value="NC_003919.1"/>
</dbReference>
<dbReference type="SMR" id="Q8PHR1"/>
<dbReference type="KEGG" id="xac:XAC3188"/>
<dbReference type="eggNOG" id="COG1492">
    <property type="taxonomic scope" value="Bacteria"/>
</dbReference>
<dbReference type="HOGENOM" id="CLU_019250_2_2_6"/>
<dbReference type="UniPathway" id="UPA00148"/>
<dbReference type="Proteomes" id="UP000000576">
    <property type="component" value="Chromosome"/>
</dbReference>
<dbReference type="GO" id="GO:0015420">
    <property type="term" value="F:ABC-type vitamin B12 transporter activity"/>
    <property type="evidence" value="ECO:0007669"/>
    <property type="project" value="UniProtKB-UniRule"/>
</dbReference>
<dbReference type="GO" id="GO:0003824">
    <property type="term" value="F:catalytic activity"/>
    <property type="evidence" value="ECO:0007669"/>
    <property type="project" value="InterPro"/>
</dbReference>
<dbReference type="GO" id="GO:0009236">
    <property type="term" value="P:cobalamin biosynthetic process"/>
    <property type="evidence" value="ECO:0007669"/>
    <property type="project" value="UniProtKB-UniRule"/>
</dbReference>
<dbReference type="CDD" id="cd05389">
    <property type="entry name" value="CobQ_N"/>
    <property type="match status" value="1"/>
</dbReference>
<dbReference type="CDD" id="cd01750">
    <property type="entry name" value="GATase1_CobQ"/>
    <property type="match status" value="1"/>
</dbReference>
<dbReference type="Gene3D" id="3.40.50.880">
    <property type="match status" value="1"/>
</dbReference>
<dbReference type="Gene3D" id="3.40.50.300">
    <property type="entry name" value="P-loop containing nucleotide triphosphate hydrolases"/>
    <property type="match status" value="1"/>
</dbReference>
<dbReference type="HAMAP" id="MF_00028">
    <property type="entry name" value="CobQ"/>
    <property type="match status" value="1"/>
</dbReference>
<dbReference type="InterPro" id="IPR029062">
    <property type="entry name" value="Class_I_gatase-like"/>
</dbReference>
<dbReference type="InterPro" id="IPR002586">
    <property type="entry name" value="CobQ/CobB/MinD/ParA_Nub-bd_dom"/>
</dbReference>
<dbReference type="InterPro" id="IPR033949">
    <property type="entry name" value="CobQ_GATase1"/>
</dbReference>
<dbReference type="InterPro" id="IPR047045">
    <property type="entry name" value="CobQ_N"/>
</dbReference>
<dbReference type="InterPro" id="IPR004459">
    <property type="entry name" value="CobQ_synth"/>
</dbReference>
<dbReference type="InterPro" id="IPR011698">
    <property type="entry name" value="GATase_3"/>
</dbReference>
<dbReference type="InterPro" id="IPR027417">
    <property type="entry name" value="P-loop_NTPase"/>
</dbReference>
<dbReference type="NCBIfam" id="TIGR00313">
    <property type="entry name" value="cobQ"/>
    <property type="match status" value="1"/>
</dbReference>
<dbReference type="NCBIfam" id="NF001989">
    <property type="entry name" value="PRK00784.1"/>
    <property type="match status" value="1"/>
</dbReference>
<dbReference type="PANTHER" id="PTHR21343:SF1">
    <property type="entry name" value="COBYRIC ACID SYNTHASE"/>
    <property type="match status" value="1"/>
</dbReference>
<dbReference type="PANTHER" id="PTHR21343">
    <property type="entry name" value="DETHIOBIOTIN SYNTHETASE"/>
    <property type="match status" value="1"/>
</dbReference>
<dbReference type="Pfam" id="PF01656">
    <property type="entry name" value="CbiA"/>
    <property type="match status" value="1"/>
</dbReference>
<dbReference type="Pfam" id="PF07685">
    <property type="entry name" value="GATase_3"/>
    <property type="match status" value="1"/>
</dbReference>
<dbReference type="SUPFAM" id="SSF52317">
    <property type="entry name" value="Class I glutamine amidotransferase-like"/>
    <property type="match status" value="1"/>
</dbReference>
<dbReference type="SUPFAM" id="SSF52540">
    <property type="entry name" value="P-loop containing nucleoside triphosphate hydrolases"/>
    <property type="match status" value="1"/>
</dbReference>
<dbReference type="PROSITE" id="PS51274">
    <property type="entry name" value="GATASE_COBBQ"/>
    <property type="match status" value="1"/>
</dbReference>
<reference key="1">
    <citation type="journal article" date="2002" name="Nature">
        <title>Comparison of the genomes of two Xanthomonas pathogens with differing host specificities.</title>
        <authorList>
            <person name="da Silva A.C.R."/>
            <person name="Ferro J.A."/>
            <person name="Reinach F.C."/>
            <person name="Farah C.S."/>
            <person name="Furlan L.R."/>
            <person name="Quaggio R.B."/>
            <person name="Monteiro-Vitorello C.B."/>
            <person name="Van Sluys M.A."/>
            <person name="Almeida N.F. Jr."/>
            <person name="Alves L.M.C."/>
            <person name="do Amaral A.M."/>
            <person name="Bertolini M.C."/>
            <person name="Camargo L.E.A."/>
            <person name="Camarotte G."/>
            <person name="Cannavan F."/>
            <person name="Cardozo J."/>
            <person name="Chambergo F."/>
            <person name="Ciapina L.P."/>
            <person name="Cicarelli R.M.B."/>
            <person name="Coutinho L.L."/>
            <person name="Cursino-Santos J.R."/>
            <person name="El-Dorry H."/>
            <person name="Faria J.B."/>
            <person name="Ferreira A.J.S."/>
            <person name="Ferreira R.C.C."/>
            <person name="Ferro M.I.T."/>
            <person name="Formighieri E.F."/>
            <person name="Franco M.C."/>
            <person name="Greggio C.C."/>
            <person name="Gruber A."/>
            <person name="Katsuyama A.M."/>
            <person name="Kishi L.T."/>
            <person name="Leite R.P."/>
            <person name="Lemos E.G.M."/>
            <person name="Lemos M.V.F."/>
            <person name="Locali E.C."/>
            <person name="Machado M.A."/>
            <person name="Madeira A.M.B.N."/>
            <person name="Martinez-Rossi N.M."/>
            <person name="Martins E.C."/>
            <person name="Meidanis J."/>
            <person name="Menck C.F.M."/>
            <person name="Miyaki C.Y."/>
            <person name="Moon D.H."/>
            <person name="Moreira L.M."/>
            <person name="Novo M.T.M."/>
            <person name="Okura V.K."/>
            <person name="Oliveira M.C."/>
            <person name="Oliveira V.R."/>
            <person name="Pereira H.A."/>
            <person name="Rossi A."/>
            <person name="Sena J.A.D."/>
            <person name="Silva C."/>
            <person name="de Souza R.F."/>
            <person name="Spinola L.A.F."/>
            <person name="Takita M.A."/>
            <person name="Tamura R.E."/>
            <person name="Teixeira E.C."/>
            <person name="Tezza R.I.D."/>
            <person name="Trindade dos Santos M."/>
            <person name="Truffi D."/>
            <person name="Tsai S.M."/>
            <person name="White F.F."/>
            <person name="Setubal J.C."/>
            <person name="Kitajima J.P."/>
        </authorList>
    </citation>
    <scope>NUCLEOTIDE SEQUENCE [LARGE SCALE GENOMIC DNA]</scope>
    <source>
        <strain>306</strain>
    </source>
</reference>
<organism>
    <name type="scientific">Xanthomonas axonopodis pv. citri (strain 306)</name>
    <dbReference type="NCBI Taxonomy" id="190486"/>
    <lineage>
        <taxon>Bacteria</taxon>
        <taxon>Pseudomonadati</taxon>
        <taxon>Pseudomonadota</taxon>
        <taxon>Gammaproteobacteria</taxon>
        <taxon>Lysobacterales</taxon>
        <taxon>Lysobacteraceae</taxon>
        <taxon>Xanthomonas</taxon>
    </lineage>
</organism>
<name>COBQ_XANAC</name>
<accession>Q8PHR1</accession>
<proteinExistence type="inferred from homology"/>
<sequence length="491" mass="51856">MSARVLMVQGCTSDAGKSTLVAALCRWLHRQGIAVAPFKPQNMALNSAVTVDGGEIGRAQALQAQACGLDPQTDFNPVLLKPNSDTGAQVIVHGQPVATLDAVGYHAYKATAFKAVLASHERLVERFDVVLVEGAGSPAEINLRANDIANMGYAEAVDCAVILVADIDRGGVFAHLVGTLALLSASERARVAGVVINRFRGDLALLQPGLEWLERETGKPVLGVLPYLHGLQLDAEDAVPRNAPQKPQSQLRVVVPVLPRISNHTDIDALLAHPQVDVRLIGPGQTPPPCDLILLPGSKSTRHDLQWLRTHGWDAAIARHLRYGGKLLGICGGLQMLGTHLHDPDGIEGAAGSSPGLGWLPLQTTLQPHKQLHRVHGRLLLGDAGVSGYEIHCGISSGAALARPLLQLDDGRTDGAISDDGQVLGTYVHGVFDHPQALAALLAWAGLAQAAPLDLAALREASLERLADAVHTHLDTAALTRLISREAACST</sequence>
<gene>
    <name evidence="1" type="primary">cobQ</name>
    <name type="ordered locus">XAC3188</name>
</gene>
<feature type="chain" id="PRO_0000141343" description="Cobyric acid synthase">
    <location>
        <begin position="1"/>
        <end position="491"/>
    </location>
</feature>
<feature type="domain" description="GATase cobBQ-type" evidence="1">
    <location>
        <begin position="250"/>
        <end position="437"/>
    </location>
</feature>
<feature type="active site" description="Nucleophile" evidence="1">
    <location>
        <position position="331"/>
    </location>
</feature>
<feature type="active site" evidence="1">
    <location>
        <position position="429"/>
    </location>
</feature>
<comment type="function">
    <text evidence="1">Catalyzes amidations at positions B, D, E, and G on adenosylcobyrinic A,C-diamide. NH(2) groups are provided by glutamine, and one molecule of ATP is hydrogenolyzed for each amidation.</text>
</comment>
<comment type="pathway">
    <text evidence="1">Cofactor biosynthesis; adenosylcobalamin biosynthesis.</text>
</comment>
<comment type="similarity">
    <text evidence="1">Belongs to the CobB/CobQ family. CobQ subfamily.</text>
</comment>
<evidence type="ECO:0000255" key="1">
    <source>
        <dbReference type="HAMAP-Rule" id="MF_00028"/>
    </source>
</evidence>
<protein>
    <recommendedName>
        <fullName evidence="1">Cobyric acid synthase</fullName>
    </recommendedName>
</protein>